<evidence type="ECO:0000255" key="1">
    <source>
        <dbReference type="HAMAP-Rule" id="MF_01569"/>
    </source>
</evidence>
<evidence type="ECO:0007829" key="2">
    <source>
        <dbReference type="PDB" id="5UCM"/>
    </source>
</evidence>
<feature type="chain" id="PRO_0000248744" description="Proline--tRNA ligase">
    <location>
        <begin position="1"/>
        <end position="571"/>
    </location>
</feature>
<feature type="helix" evidence="2">
    <location>
        <begin position="3"/>
        <end position="6"/>
    </location>
</feature>
<feature type="helix" evidence="2">
    <location>
        <begin position="21"/>
        <end position="28"/>
    </location>
</feature>
<feature type="strand" evidence="2">
    <location>
        <begin position="31"/>
        <end position="36"/>
    </location>
</feature>
<feature type="strand" evidence="2">
    <location>
        <begin position="39"/>
        <end position="42"/>
    </location>
</feature>
<feature type="helix" evidence="2">
    <location>
        <begin position="44"/>
        <end position="63"/>
    </location>
</feature>
<feature type="strand" evidence="2">
    <location>
        <begin position="73"/>
        <end position="76"/>
    </location>
</feature>
<feature type="helix" evidence="2">
    <location>
        <begin position="77"/>
        <end position="82"/>
    </location>
</feature>
<feature type="helix" evidence="2">
    <location>
        <begin position="85"/>
        <end position="88"/>
    </location>
</feature>
<feature type="strand" evidence="2">
    <location>
        <begin position="93"/>
        <end position="97"/>
    </location>
</feature>
<feature type="strand" evidence="2">
    <location>
        <begin position="103"/>
        <end position="106"/>
    </location>
</feature>
<feature type="helix" evidence="2">
    <location>
        <begin position="111"/>
        <end position="121"/>
    </location>
</feature>
<feature type="helix" evidence="2">
    <location>
        <begin position="125"/>
        <end position="127"/>
    </location>
</feature>
<feature type="strand" evidence="2">
    <location>
        <begin position="129"/>
        <end position="139"/>
    </location>
</feature>
<feature type="helix" evidence="2">
    <location>
        <begin position="148"/>
        <end position="150"/>
    </location>
</feature>
<feature type="strand" evidence="2">
    <location>
        <begin position="153"/>
        <end position="166"/>
    </location>
</feature>
<feature type="helix" evidence="2">
    <location>
        <begin position="167"/>
        <end position="187"/>
    </location>
</feature>
<feature type="strand" evidence="2">
    <location>
        <begin position="192"/>
        <end position="196"/>
    </location>
</feature>
<feature type="strand" evidence="2">
    <location>
        <begin position="200"/>
        <end position="203"/>
    </location>
</feature>
<feature type="strand" evidence="2">
    <location>
        <begin position="207"/>
        <end position="213"/>
    </location>
</feature>
<feature type="strand" evidence="2">
    <location>
        <begin position="218"/>
        <end position="228"/>
    </location>
</feature>
<feature type="strand" evidence="2">
    <location>
        <begin position="230"/>
        <end position="232"/>
    </location>
</feature>
<feature type="turn" evidence="2">
    <location>
        <begin position="233"/>
        <end position="235"/>
    </location>
</feature>
<feature type="strand" evidence="2">
    <location>
        <begin position="253"/>
        <end position="256"/>
    </location>
</feature>
<feature type="helix" evidence="2">
    <location>
        <begin position="263"/>
        <end position="270"/>
    </location>
</feature>
<feature type="helix" evidence="2">
    <location>
        <begin position="274"/>
        <end position="276"/>
    </location>
</feature>
<feature type="strand" evidence="2">
    <location>
        <begin position="277"/>
        <end position="287"/>
    </location>
</feature>
<feature type="strand" evidence="2">
    <location>
        <begin position="291"/>
        <end position="297"/>
    </location>
</feature>
<feature type="helix" evidence="2">
    <location>
        <begin position="304"/>
        <end position="309"/>
    </location>
</feature>
<feature type="helix" evidence="2">
    <location>
        <begin position="322"/>
        <end position="329"/>
    </location>
</feature>
<feature type="strand" evidence="2">
    <location>
        <begin position="343"/>
        <end position="348"/>
    </location>
</feature>
<feature type="helix" evidence="2">
    <location>
        <begin position="349"/>
        <end position="352"/>
    </location>
</feature>
<feature type="strand" evidence="2">
    <location>
        <begin position="356"/>
        <end position="360"/>
    </location>
</feature>
<feature type="strand" evidence="2">
    <location>
        <begin position="366"/>
        <end position="371"/>
    </location>
</feature>
<feature type="turn" evidence="2">
    <location>
        <begin position="374"/>
        <end position="376"/>
    </location>
</feature>
<feature type="strand" evidence="2">
    <location>
        <begin position="381"/>
        <end position="383"/>
    </location>
</feature>
<feature type="strand" evidence="2">
    <location>
        <begin position="397"/>
        <end position="416"/>
    </location>
</feature>
<feature type="helix" evidence="2">
    <location>
        <begin position="418"/>
        <end position="422"/>
    </location>
</feature>
<feature type="strand" evidence="2">
    <location>
        <begin position="426"/>
        <end position="428"/>
    </location>
</feature>
<feature type="strand" evidence="2">
    <location>
        <begin position="434"/>
        <end position="436"/>
    </location>
</feature>
<feature type="strand" evidence="2">
    <location>
        <begin position="438"/>
        <end position="445"/>
    </location>
</feature>
<feature type="helix" evidence="2">
    <location>
        <begin position="446"/>
        <end position="456"/>
    </location>
</feature>
<feature type="strand" evidence="2">
    <location>
        <begin position="457"/>
        <end position="459"/>
    </location>
</feature>
<feature type="helix" evidence="2">
    <location>
        <begin position="467"/>
        <end position="469"/>
    </location>
</feature>
<feature type="strand" evidence="2">
    <location>
        <begin position="473"/>
        <end position="478"/>
    </location>
</feature>
<feature type="turn" evidence="2">
    <location>
        <begin position="479"/>
        <end position="482"/>
    </location>
</feature>
<feature type="helix" evidence="2">
    <location>
        <begin position="486"/>
        <end position="499"/>
    </location>
</feature>
<feature type="strand" evidence="2">
    <location>
        <begin position="504"/>
        <end position="506"/>
    </location>
</feature>
<feature type="strand" evidence="2">
    <location>
        <begin position="511"/>
        <end position="513"/>
    </location>
</feature>
<feature type="helix" evidence="2">
    <location>
        <begin position="515"/>
        <end position="524"/>
    </location>
</feature>
<feature type="strand" evidence="2">
    <location>
        <begin position="528"/>
        <end position="533"/>
    </location>
</feature>
<feature type="helix" evidence="2">
    <location>
        <begin position="535"/>
        <end position="539"/>
    </location>
</feature>
<feature type="strand" evidence="2">
    <location>
        <begin position="542"/>
        <end position="549"/>
    </location>
</feature>
<feature type="strand" evidence="2">
    <location>
        <begin position="554"/>
        <end position="557"/>
    </location>
</feature>
<feature type="helix" evidence="2">
    <location>
        <begin position="558"/>
        <end position="568"/>
    </location>
</feature>
<keyword id="KW-0002">3D-structure</keyword>
<keyword id="KW-0030">Aminoacyl-tRNA synthetase</keyword>
<keyword id="KW-0067">ATP-binding</keyword>
<keyword id="KW-0963">Cytoplasm</keyword>
<keyword id="KW-0436">Ligase</keyword>
<keyword id="KW-0547">Nucleotide-binding</keyword>
<keyword id="KW-0648">Protein biosynthesis</keyword>
<keyword id="KW-1185">Reference proteome</keyword>
<comment type="function">
    <text evidence="1">Catalyzes the attachment of proline to tRNA(Pro) in a two-step reaction: proline is first activated by ATP to form Pro-AMP and then transferred to the acceptor end of tRNA(Pro). As ProRS can inadvertently accommodate and process non-cognate amino acids such as alanine and cysteine, to avoid such errors it has two additional distinct editing activities against alanine. One activity is designated as 'pretransfer' editing and involves the tRNA(Pro)-independent hydrolysis of activated Ala-AMP. The other activity is designated 'posttransfer' editing and involves deacylation of mischarged Ala-tRNA(Pro). The misacylated Cys-tRNA(Pro) is not edited by ProRS.</text>
</comment>
<comment type="catalytic activity">
    <reaction evidence="1">
        <text>tRNA(Pro) + L-proline + ATP = L-prolyl-tRNA(Pro) + AMP + diphosphate</text>
        <dbReference type="Rhea" id="RHEA:14305"/>
        <dbReference type="Rhea" id="RHEA-COMP:9700"/>
        <dbReference type="Rhea" id="RHEA-COMP:9702"/>
        <dbReference type="ChEBI" id="CHEBI:30616"/>
        <dbReference type="ChEBI" id="CHEBI:33019"/>
        <dbReference type="ChEBI" id="CHEBI:60039"/>
        <dbReference type="ChEBI" id="CHEBI:78442"/>
        <dbReference type="ChEBI" id="CHEBI:78532"/>
        <dbReference type="ChEBI" id="CHEBI:456215"/>
        <dbReference type="EC" id="6.1.1.15"/>
    </reaction>
</comment>
<comment type="subunit">
    <text evidence="1">Homodimer.</text>
</comment>
<comment type="subcellular location">
    <subcellularLocation>
        <location evidence="1">Cytoplasm</location>
    </subcellularLocation>
</comment>
<comment type="domain">
    <text evidence="1">Consists of three domains: the N-terminal catalytic domain, the editing domain and the C-terminal anticodon-binding domain.</text>
</comment>
<comment type="similarity">
    <text evidence="1">Belongs to the class-II aminoacyl-tRNA synthetase family. ProS type 1 subfamily.</text>
</comment>
<organism>
    <name type="scientific">Pseudomonas aeruginosa (strain ATCC 15692 / DSM 22644 / CIP 104116 / JCM 14847 / LMG 12228 / 1C / PRS 101 / PAO1)</name>
    <dbReference type="NCBI Taxonomy" id="208964"/>
    <lineage>
        <taxon>Bacteria</taxon>
        <taxon>Pseudomonadati</taxon>
        <taxon>Pseudomonadota</taxon>
        <taxon>Gammaproteobacteria</taxon>
        <taxon>Pseudomonadales</taxon>
        <taxon>Pseudomonadaceae</taxon>
        <taxon>Pseudomonas</taxon>
    </lineage>
</organism>
<name>SYP_PSEAE</name>
<reference key="1">
    <citation type="journal article" date="2000" name="Nature">
        <title>Complete genome sequence of Pseudomonas aeruginosa PAO1, an opportunistic pathogen.</title>
        <authorList>
            <person name="Stover C.K."/>
            <person name="Pham X.-Q.T."/>
            <person name="Erwin A.L."/>
            <person name="Mizoguchi S.D."/>
            <person name="Warrener P."/>
            <person name="Hickey M.J."/>
            <person name="Brinkman F.S.L."/>
            <person name="Hufnagle W.O."/>
            <person name="Kowalik D.J."/>
            <person name="Lagrou M."/>
            <person name="Garber R.L."/>
            <person name="Goltry L."/>
            <person name="Tolentino E."/>
            <person name="Westbrock-Wadman S."/>
            <person name="Yuan Y."/>
            <person name="Brody L.L."/>
            <person name="Coulter S.N."/>
            <person name="Folger K.R."/>
            <person name="Kas A."/>
            <person name="Larbig K."/>
            <person name="Lim R.M."/>
            <person name="Smith K.A."/>
            <person name="Spencer D.H."/>
            <person name="Wong G.K.-S."/>
            <person name="Wu Z."/>
            <person name="Paulsen I.T."/>
            <person name="Reizer J."/>
            <person name="Saier M.H. Jr."/>
            <person name="Hancock R.E.W."/>
            <person name="Lory S."/>
            <person name="Olson M.V."/>
        </authorList>
    </citation>
    <scope>NUCLEOTIDE SEQUENCE [LARGE SCALE GENOMIC DNA]</scope>
    <source>
        <strain>ATCC 15692 / DSM 22644 / CIP 104116 / JCM 14847 / LMG 12228 / 1C / PRS 101 / PAO1</strain>
    </source>
</reference>
<protein>
    <recommendedName>
        <fullName evidence="1">Proline--tRNA ligase</fullName>
        <ecNumber evidence="1">6.1.1.15</ecNumber>
    </recommendedName>
    <alternativeName>
        <fullName evidence="1">Prolyl-tRNA synthetase</fullName>
        <shortName evidence="1">ProRS</shortName>
    </alternativeName>
</protein>
<dbReference type="EC" id="6.1.1.15" evidence="1"/>
<dbReference type="EMBL" id="AE004091">
    <property type="protein sequence ID" value="AAG04345.1"/>
    <property type="molecule type" value="Genomic_DNA"/>
</dbReference>
<dbReference type="PIR" id="C83527">
    <property type="entry name" value="C83527"/>
</dbReference>
<dbReference type="RefSeq" id="NP_249647.1">
    <property type="nucleotide sequence ID" value="NC_002516.2"/>
</dbReference>
<dbReference type="RefSeq" id="WP_003102377.1">
    <property type="nucleotide sequence ID" value="NZ_QZGE01000007.1"/>
</dbReference>
<dbReference type="PDB" id="5UCM">
    <property type="method" value="X-ray"/>
    <property type="resolution" value="2.60 A"/>
    <property type="chains" value="A/B=1-571"/>
</dbReference>
<dbReference type="PDB" id="8W8J">
    <property type="method" value="X-ray"/>
    <property type="resolution" value="1.81 A"/>
    <property type="chains" value="A/B=1-571"/>
</dbReference>
<dbReference type="PDB" id="8W8L">
    <property type="method" value="X-ray"/>
    <property type="resolution" value="1.82 A"/>
    <property type="chains" value="A/B=1-571"/>
</dbReference>
<dbReference type="PDB" id="8W9I">
    <property type="method" value="X-ray"/>
    <property type="resolution" value="2.45 A"/>
    <property type="chains" value="A/B=1-571"/>
</dbReference>
<dbReference type="PDBsum" id="5UCM"/>
<dbReference type="PDBsum" id="8W8J"/>
<dbReference type="PDBsum" id="8W8L"/>
<dbReference type="PDBsum" id="8W9I"/>
<dbReference type="SMR" id="Q9I502"/>
<dbReference type="FunCoup" id="Q9I502">
    <property type="interactions" value="674"/>
</dbReference>
<dbReference type="STRING" id="208964.PA0956"/>
<dbReference type="PaxDb" id="208964-PA0956"/>
<dbReference type="GeneID" id="879563"/>
<dbReference type="KEGG" id="pae:PA0956"/>
<dbReference type="PATRIC" id="fig|208964.12.peg.994"/>
<dbReference type="PseudoCAP" id="PA0956"/>
<dbReference type="HOGENOM" id="CLU_016739_0_0_6"/>
<dbReference type="InParanoid" id="Q9I502"/>
<dbReference type="OrthoDB" id="9809052at2"/>
<dbReference type="PhylomeDB" id="Q9I502"/>
<dbReference type="BioCyc" id="PAER208964:G1FZ6-977-MONOMER"/>
<dbReference type="Proteomes" id="UP000002438">
    <property type="component" value="Chromosome"/>
</dbReference>
<dbReference type="GO" id="GO:0005829">
    <property type="term" value="C:cytosol"/>
    <property type="evidence" value="ECO:0000318"/>
    <property type="project" value="GO_Central"/>
</dbReference>
<dbReference type="GO" id="GO:0002161">
    <property type="term" value="F:aminoacyl-tRNA deacylase activity"/>
    <property type="evidence" value="ECO:0007669"/>
    <property type="project" value="InterPro"/>
</dbReference>
<dbReference type="GO" id="GO:0005524">
    <property type="term" value="F:ATP binding"/>
    <property type="evidence" value="ECO:0007669"/>
    <property type="project" value="UniProtKB-UniRule"/>
</dbReference>
<dbReference type="GO" id="GO:0004827">
    <property type="term" value="F:proline-tRNA ligase activity"/>
    <property type="evidence" value="ECO:0000318"/>
    <property type="project" value="GO_Central"/>
</dbReference>
<dbReference type="GO" id="GO:0006433">
    <property type="term" value="P:prolyl-tRNA aminoacylation"/>
    <property type="evidence" value="ECO:0000318"/>
    <property type="project" value="GO_Central"/>
</dbReference>
<dbReference type="CDD" id="cd04334">
    <property type="entry name" value="ProRS-INS"/>
    <property type="match status" value="1"/>
</dbReference>
<dbReference type="CDD" id="cd00861">
    <property type="entry name" value="ProRS_anticodon_short"/>
    <property type="match status" value="1"/>
</dbReference>
<dbReference type="CDD" id="cd00779">
    <property type="entry name" value="ProRS_core_prok"/>
    <property type="match status" value="1"/>
</dbReference>
<dbReference type="FunFam" id="3.30.930.10:FF:000012">
    <property type="entry name" value="Proline--tRNA ligase"/>
    <property type="match status" value="1"/>
</dbReference>
<dbReference type="FunFam" id="3.30.930.10:FF:000097">
    <property type="entry name" value="Proline--tRNA ligase"/>
    <property type="match status" value="1"/>
</dbReference>
<dbReference type="FunFam" id="3.40.50.800:FF:000006">
    <property type="entry name" value="Proline--tRNA ligase"/>
    <property type="match status" value="1"/>
</dbReference>
<dbReference type="FunFam" id="3.90.960.10:FF:000001">
    <property type="entry name" value="Proline--tRNA ligase"/>
    <property type="match status" value="1"/>
</dbReference>
<dbReference type="Gene3D" id="3.40.50.800">
    <property type="entry name" value="Anticodon-binding domain"/>
    <property type="match status" value="1"/>
</dbReference>
<dbReference type="Gene3D" id="3.30.930.10">
    <property type="entry name" value="Bira Bifunctional Protein, Domain 2"/>
    <property type="match status" value="2"/>
</dbReference>
<dbReference type="Gene3D" id="3.90.960.10">
    <property type="entry name" value="YbaK/aminoacyl-tRNA synthetase-associated domain"/>
    <property type="match status" value="1"/>
</dbReference>
<dbReference type="HAMAP" id="MF_01569">
    <property type="entry name" value="Pro_tRNA_synth_type1"/>
    <property type="match status" value="1"/>
</dbReference>
<dbReference type="InterPro" id="IPR002314">
    <property type="entry name" value="aa-tRNA-synt_IIb"/>
</dbReference>
<dbReference type="InterPro" id="IPR006195">
    <property type="entry name" value="aa-tRNA-synth_II"/>
</dbReference>
<dbReference type="InterPro" id="IPR045864">
    <property type="entry name" value="aa-tRNA-synth_II/BPL/LPL"/>
</dbReference>
<dbReference type="InterPro" id="IPR004154">
    <property type="entry name" value="Anticodon-bd"/>
</dbReference>
<dbReference type="InterPro" id="IPR036621">
    <property type="entry name" value="Anticodon-bd_dom_sf"/>
</dbReference>
<dbReference type="InterPro" id="IPR002316">
    <property type="entry name" value="Pro-tRNA-ligase_IIa"/>
</dbReference>
<dbReference type="InterPro" id="IPR004500">
    <property type="entry name" value="Pro-tRNA-synth_IIa_bac-type"/>
</dbReference>
<dbReference type="InterPro" id="IPR023717">
    <property type="entry name" value="Pro-tRNA-Synthase_IIa_type1"/>
</dbReference>
<dbReference type="InterPro" id="IPR050062">
    <property type="entry name" value="Pro-tRNA_synthetase"/>
</dbReference>
<dbReference type="InterPro" id="IPR044140">
    <property type="entry name" value="ProRS_anticodon_short"/>
</dbReference>
<dbReference type="InterPro" id="IPR033730">
    <property type="entry name" value="ProRS_core_prok"/>
</dbReference>
<dbReference type="InterPro" id="IPR036754">
    <property type="entry name" value="YbaK/aa-tRNA-synt-asso_dom_sf"/>
</dbReference>
<dbReference type="InterPro" id="IPR007214">
    <property type="entry name" value="YbaK/aa-tRNA-synth-assoc-dom"/>
</dbReference>
<dbReference type="NCBIfam" id="NF006625">
    <property type="entry name" value="PRK09194.1"/>
    <property type="match status" value="1"/>
</dbReference>
<dbReference type="NCBIfam" id="TIGR00409">
    <property type="entry name" value="proS_fam_II"/>
    <property type="match status" value="1"/>
</dbReference>
<dbReference type="PANTHER" id="PTHR42753">
    <property type="entry name" value="MITOCHONDRIAL RIBOSOME PROTEIN L39/PROLYL-TRNA LIGASE FAMILY MEMBER"/>
    <property type="match status" value="1"/>
</dbReference>
<dbReference type="PANTHER" id="PTHR42753:SF2">
    <property type="entry name" value="PROLINE--TRNA LIGASE"/>
    <property type="match status" value="1"/>
</dbReference>
<dbReference type="Pfam" id="PF03129">
    <property type="entry name" value="HGTP_anticodon"/>
    <property type="match status" value="1"/>
</dbReference>
<dbReference type="Pfam" id="PF00587">
    <property type="entry name" value="tRNA-synt_2b"/>
    <property type="match status" value="1"/>
</dbReference>
<dbReference type="Pfam" id="PF04073">
    <property type="entry name" value="tRNA_edit"/>
    <property type="match status" value="1"/>
</dbReference>
<dbReference type="PIRSF" id="PIRSF001535">
    <property type="entry name" value="ProRS_1"/>
    <property type="match status" value="1"/>
</dbReference>
<dbReference type="PRINTS" id="PR01046">
    <property type="entry name" value="TRNASYNTHPRO"/>
</dbReference>
<dbReference type="SUPFAM" id="SSF52954">
    <property type="entry name" value="Class II aaRS ABD-related"/>
    <property type="match status" value="1"/>
</dbReference>
<dbReference type="SUPFAM" id="SSF55681">
    <property type="entry name" value="Class II aaRS and biotin synthetases"/>
    <property type="match status" value="1"/>
</dbReference>
<dbReference type="SUPFAM" id="SSF55826">
    <property type="entry name" value="YbaK/ProRS associated domain"/>
    <property type="match status" value="1"/>
</dbReference>
<dbReference type="PROSITE" id="PS50862">
    <property type="entry name" value="AA_TRNA_LIGASE_II"/>
    <property type="match status" value="1"/>
</dbReference>
<gene>
    <name evidence="1" type="primary">proS</name>
    <name type="ordered locus">PA0956</name>
</gene>
<proteinExistence type="evidence at protein level"/>
<accession>Q9I502</accession>
<sequence>MRTSQYLLSTLKETPADAVVISHQLLLRAGMIRRLASGLYTWLPMGLRVLRKVETIVREEMNAAGALEVLMPAVQPAELWQESGRWEQYGPELLRLKDRHEREFCVGPTHEEVITDLARNELNSYKQLPINFYQIQTKFRDEIRPRFGLMRGREFIMKDAYSFHLSQDSLQQTYDGMYQAYSKIFSRLGLDFRPVQADNGSIGGSGSHEFHVLANSGEDDIVFSDSSDYAANIEKAEAVPRESARGSATEDMRLVDTPNTKTIAALVDGFQLPIEKTIKTLVVHGAEEGTLVALIVRGDHELNEIKAANQPLVASPLVFASEAEIRAAIGAGPGSLGPVNLPIACIVDRSVALMSDFAAGANIEDKHYFGVNWERDLPLPEVADLRNVVEGDPSPDGKGTLVIKRGIEVGHIFQLGTKYSEAMKLSVLSEQGKPVNLIMGCYGIGVSRVVAAAIEQNHDERGILWPSALAPFQIALVPLKYETESVKQATDKLYAELTAAGFEVLLDDRDKKTSPGVKFADMELIGIPHRIVISDRGLSEGVLEYKGRRDSESQNLPIGELMSFITEKLSR</sequence>